<reference key="1">
    <citation type="journal article" date="2005" name="PLoS Biol.">
        <title>The genome sequence of Rickettsia felis identifies the first putative conjugative plasmid in an obligate intracellular parasite.</title>
        <authorList>
            <person name="Ogata H."/>
            <person name="Renesto P."/>
            <person name="Audic S."/>
            <person name="Robert C."/>
            <person name="Blanc G."/>
            <person name="Fournier P.-E."/>
            <person name="Parinello H."/>
            <person name="Claverie J.-M."/>
            <person name="Raoult D."/>
        </authorList>
    </citation>
    <scope>NUCLEOTIDE SEQUENCE [LARGE SCALE GENOMIC DNA]</scope>
    <source>
        <strain>ATCC VR-1525 / URRWXCal2</strain>
    </source>
</reference>
<name>TGT_RICFE</name>
<feature type="chain" id="PRO_0000278058" description="Queuine tRNA-ribosyltransferase">
    <location>
        <begin position="1"/>
        <end position="361"/>
    </location>
</feature>
<feature type="region of interest" description="RNA binding" evidence="1">
    <location>
        <begin position="247"/>
        <end position="253"/>
    </location>
</feature>
<feature type="region of interest" description="RNA binding; important for wobble base 34 recognition" evidence="1">
    <location>
        <begin position="271"/>
        <end position="275"/>
    </location>
</feature>
<feature type="active site" description="Proton acceptor" evidence="1">
    <location>
        <position position="92"/>
    </location>
</feature>
<feature type="active site" description="Nucleophile" evidence="1">
    <location>
        <position position="266"/>
    </location>
</feature>
<feature type="binding site" evidence="1">
    <location>
        <begin position="92"/>
        <end position="96"/>
    </location>
    <ligand>
        <name>substrate</name>
    </ligand>
</feature>
<feature type="binding site" evidence="1">
    <location>
        <position position="146"/>
    </location>
    <ligand>
        <name>substrate</name>
    </ligand>
</feature>
<feature type="binding site" evidence="1">
    <location>
        <position position="189"/>
    </location>
    <ligand>
        <name>substrate</name>
    </ligand>
</feature>
<feature type="binding site" evidence="1">
    <location>
        <position position="216"/>
    </location>
    <ligand>
        <name>substrate</name>
    </ligand>
</feature>
<feature type="binding site" evidence="1">
    <location>
        <position position="304"/>
    </location>
    <ligand>
        <name>Zn(2+)</name>
        <dbReference type="ChEBI" id="CHEBI:29105"/>
    </ligand>
</feature>
<feature type="binding site" evidence="1">
    <location>
        <position position="306"/>
    </location>
    <ligand>
        <name>Zn(2+)</name>
        <dbReference type="ChEBI" id="CHEBI:29105"/>
    </ligand>
</feature>
<feature type="binding site" evidence="1">
    <location>
        <position position="309"/>
    </location>
    <ligand>
        <name>Zn(2+)</name>
        <dbReference type="ChEBI" id="CHEBI:29105"/>
    </ligand>
</feature>
<feature type="binding site" evidence="1">
    <location>
        <position position="335"/>
    </location>
    <ligand>
        <name>Zn(2+)</name>
        <dbReference type="ChEBI" id="CHEBI:29105"/>
    </ligand>
</feature>
<evidence type="ECO:0000255" key="1">
    <source>
        <dbReference type="HAMAP-Rule" id="MF_00168"/>
    </source>
</evidence>
<comment type="function">
    <text evidence="1">Catalyzes the base-exchange of a guanine (G) residue with the queuine precursor 7-aminomethyl-7-deazaguanine (PreQ1) at position 34 (anticodon wobble position) in tRNAs with GU(N) anticodons (tRNA-Asp, -Asn, -His and -Tyr). Catalysis occurs through a double-displacement mechanism. The nucleophile active site attacks the C1' of nucleotide 34 to detach the guanine base from the RNA, forming a covalent enzyme-RNA intermediate. The proton acceptor active site deprotonates the incoming PreQ1, allowing a nucleophilic attack on the C1' of the ribose to form the product. After dissociation, two additional enzymatic reactions on the tRNA convert PreQ1 to queuine (Q), resulting in the hypermodified nucleoside queuosine (7-(((4,5-cis-dihydroxy-2-cyclopenten-1-yl)amino)methyl)-7-deazaguanosine).</text>
</comment>
<comment type="catalytic activity">
    <reaction evidence="1">
        <text>7-aminomethyl-7-carbaguanine + guanosine(34) in tRNA = 7-aminomethyl-7-carbaguanosine(34) in tRNA + guanine</text>
        <dbReference type="Rhea" id="RHEA:24104"/>
        <dbReference type="Rhea" id="RHEA-COMP:10341"/>
        <dbReference type="Rhea" id="RHEA-COMP:10342"/>
        <dbReference type="ChEBI" id="CHEBI:16235"/>
        <dbReference type="ChEBI" id="CHEBI:58703"/>
        <dbReference type="ChEBI" id="CHEBI:74269"/>
        <dbReference type="ChEBI" id="CHEBI:82833"/>
        <dbReference type="EC" id="2.4.2.29"/>
    </reaction>
</comment>
<comment type="cofactor">
    <cofactor evidence="1">
        <name>Zn(2+)</name>
        <dbReference type="ChEBI" id="CHEBI:29105"/>
    </cofactor>
    <text evidence="1">Binds 1 zinc ion per subunit.</text>
</comment>
<comment type="pathway">
    <text evidence="1">tRNA modification; tRNA-queuosine biosynthesis.</text>
</comment>
<comment type="subunit">
    <text evidence="1">Homodimer. Within each dimer, one monomer is responsible for RNA recognition and catalysis, while the other monomer binds to the replacement base PreQ1.</text>
</comment>
<comment type="similarity">
    <text evidence="1">Belongs to the queuine tRNA-ribosyltransferase family.</text>
</comment>
<gene>
    <name evidence="1" type="primary">tgt</name>
    <name type="ordered locus">RF_0191</name>
</gene>
<organism>
    <name type="scientific">Rickettsia felis (strain ATCC VR-1525 / URRWXCal2)</name>
    <name type="common">Rickettsia azadi</name>
    <dbReference type="NCBI Taxonomy" id="315456"/>
    <lineage>
        <taxon>Bacteria</taxon>
        <taxon>Pseudomonadati</taxon>
        <taxon>Pseudomonadota</taxon>
        <taxon>Alphaproteobacteria</taxon>
        <taxon>Rickettsiales</taxon>
        <taxon>Rickettsiaceae</taxon>
        <taxon>Rickettsieae</taxon>
        <taxon>Rickettsia</taxon>
        <taxon>spotted fever group</taxon>
    </lineage>
</organism>
<dbReference type="EC" id="2.4.2.29" evidence="1"/>
<dbReference type="EMBL" id="CP000053">
    <property type="protein sequence ID" value="AAY61042.1"/>
    <property type="molecule type" value="Genomic_DNA"/>
</dbReference>
<dbReference type="SMR" id="Q4UN16"/>
<dbReference type="STRING" id="315456.RF_0191"/>
<dbReference type="KEGG" id="rfe:RF_0191"/>
<dbReference type="eggNOG" id="COG0343">
    <property type="taxonomic scope" value="Bacteria"/>
</dbReference>
<dbReference type="HOGENOM" id="CLU_022060_0_1_5"/>
<dbReference type="OrthoDB" id="9805417at2"/>
<dbReference type="UniPathway" id="UPA00392"/>
<dbReference type="Proteomes" id="UP000008548">
    <property type="component" value="Chromosome"/>
</dbReference>
<dbReference type="GO" id="GO:0005737">
    <property type="term" value="C:cytoplasm"/>
    <property type="evidence" value="ECO:0007669"/>
    <property type="project" value="TreeGrafter"/>
</dbReference>
<dbReference type="GO" id="GO:0046872">
    <property type="term" value="F:metal ion binding"/>
    <property type="evidence" value="ECO:0007669"/>
    <property type="project" value="UniProtKB-KW"/>
</dbReference>
<dbReference type="GO" id="GO:0008479">
    <property type="term" value="F:tRNA-guanosine(34) queuine transglycosylase activity"/>
    <property type="evidence" value="ECO:0007669"/>
    <property type="project" value="UniProtKB-UniRule"/>
</dbReference>
<dbReference type="GO" id="GO:0008616">
    <property type="term" value="P:queuosine biosynthetic process"/>
    <property type="evidence" value="ECO:0007669"/>
    <property type="project" value="UniProtKB-UniRule"/>
</dbReference>
<dbReference type="GO" id="GO:0002099">
    <property type="term" value="P:tRNA wobble guanine modification"/>
    <property type="evidence" value="ECO:0007669"/>
    <property type="project" value="TreeGrafter"/>
</dbReference>
<dbReference type="GO" id="GO:0101030">
    <property type="term" value="P:tRNA-guanine transglycosylation"/>
    <property type="evidence" value="ECO:0007669"/>
    <property type="project" value="InterPro"/>
</dbReference>
<dbReference type="FunFam" id="3.20.20.105:FF:000001">
    <property type="entry name" value="Queuine tRNA-ribosyltransferase"/>
    <property type="match status" value="1"/>
</dbReference>
<dbReference type="Gene3D" id="3.20.20.105">
    <property type="entry name" value="Queuine tRNA-ribosyltransferase-like"/>
    <property type="match status" value="1"/>
</dbReference>
<dbReference type="HAMAP" id="MF_00168">
    <property type="entry name" value="Q_tRNA_Tgt"/>
    <property type="match status" value="1"/>
</dbReference>
<dbReference type="InterPro" id="IPR050076">
    <property type="entry name" value="ArchSynthase1/Queuine_TRR"/>
</dbReference>
<dbReference type="InterPro" id="IPR004803">
    <property type="entry name" value="TGT"/>
</dbReference>
<dbReference type="InterPro" id="IPR036511">
    <property type="entry name" value="TGT-like_sf"/>
</dbReference>
<dbReference type="InterPro" id="IPR002616">
    <property type="entry name" value="tRNA_ribo_trans-like"/>
</dbReference>
<dbReference type="NCBIfam" id="TIGR00430">
    <property type="entry name" value="Q_tRNA_tgt"/>
    <property type="match status" value="1"/>
</dbReference>
<dbReference type="NCBIfam" id="TIGR00449">
    <property type="entry name" value="tgt_general"/>
    <property type="match status" value="1"/>
</dbReference>
<dbReference type="PANTHER" id="PTHR46499">
    <property type="entry name" value="QUEUINE TRNA-RIBOSYLTRANSFERASE"/>
    <property type="match status" value="1"/>
</dbReference>
<dbReference type="PANTHER" id="PTHR46499:SF1">
    <property type="entry name" value="QUEUINE TRNA-RIBOSYLTRANSFERASE"/>
    <property type="match status" value="1"/>
</dbReference>
<dbReference type="Pfam" id="PF01702">
    <property type="entry name" value="TGT"/>
    <property type="match status" value="1"/>
</dbReference>
<dbReference type="SUPFAM" id="SSF51713">
    <property type="entry name" value="tRNA-guanine transglycosylase"/>
    <property type="match status" value="1"/>
</dbReference>
<sequence>MSKFSFNIHHQHKKARNGVITTAHGEIRTPAFMPVGTRGTVKAMLPESVAETGADILLGNTYHLMLQPTAERIARLGGLHKFMNWDKPILTDSGGFQVMSLSKLRKITEEGVSFSSHINGDKYMLTPERSTEIQHLLGSTITMAFDECTPYPATFEEAKTSMQLTTRWANRSRNAFVKRDGYAQFGIIQGSVYEELREQSARDLVELDFEGYAIGGLAVGEGQELMFKVLDYAPDFLPQNKPCYLMGVGKPADIIGAVRRGIDMFDCVIPTRSGRNGQAFTKYGTVNIRNSKYADDNEPLEHDCLCPACKNYSKAYLHLLVRIGEILGAMLMTWHNLTYFQNLMSRIRKYIKLGKDFDFDS</sequence>
<accession>Q4UN16</accession>
<proteinExistence type="inferred from homology"/>
<protein>
    <recommendedName>
        <fullName evidence="1">Queuine tRNA-ribosyltransferase</fullName>
        <ecNumber evidence="1">2.4.2.29</ecNumber>
    </recommendedName>
    <alternativeName>
        <fullName evidence="1">Guanine insertion enzyme</fullName>
    </alternativeName>
    <alternativeName>
        <fullName evidence="1">tRNA-guanine transglycosylase</fullName>
    </alternativeName>
</protein>
<keyword id="KW-0328">Glycosyltransferase</keyword>
<keyword id="KW-0479">Metal-binding</keyword>
<keyword id="KW-0671">Queuosine biosynthesis</keyword>
<keyword id="KW-0808">Transferase</keyword>
<keyword id="KW-0819">tRNA processing</keyword>
<keyword id="KW-0862">Zinc</keyword>